<protein>
    <recommendedName>
        <fullName evidence="1">Lipoprotein signal peptidase</fullName>
        <ecNumber evidence="1">3.4.23.36</ecNumber>
    </recommendedName>
    <alternativeName>
        <fullName evidence="1">Prolipoprotein signal peptidase</fullName>
    </alternativeName>
    <alternativeName>
        <fullName evidence="1">Signal peptidase II</fullName>
        <shortName evidence="1">SPase II</shortName>
    </alternativeName>
</protein>
<evidence type="ECO:0000255" key="1">
    <source>
        <dbReference type="HAMAP-Rule" id="MF_00161"/>
    </source>
</evidence>
<keyword id="KW-0064">Aspartyl protease</keyword>
<keyword id="KW-1003">Cell membrane</keyword>
<keyword id="KW-0378">Hydrolase</keyword>
<keyword id="KW-0472">Membrane</keyword>
<keyword id="KW-0645">Protease</keyword>
<keyword id="KW-1185">Reference proteome</keyword>
<keyword id="KW-0812">Transmembrane</keyword>
<keyword id="KW-1133">Transmembrane helix</keyword>
<reference key="1">
    <citation type="submission" date="2005-03" db="EMBL/GenBank/DDBJ databases">
        <title>Brevibacillus brevis strain 47, complete genome.</title>
        <authorList>
            <person name="Hosoyama A."/>
            <person name="Yamada R."/>
            <person name="Hongo Y."/>
            <person name="Terui Y."/>
            <person name="Ankai A."/>
            <person name="Masuyama W."/>
            <person name="Sekiguchi M."/>
            <person name="Takeda T."/>
            <person name="Asano K."/>
            <person name="Ohji S."/>
            <person name="Ichikawa N."/>
            <person name="Narita S."/>
            <person name="Aoki N."/>
            <person name="Miura H."/>
            <person name="Matsushita S."/>
            <person name="Sekigawa T."/>
            <person name="Yamagata H."/>
            <person name="Yoshikawa H."/>
            <person name="Udaka S."/>
            <person name="Tanikawa S."/>
            <person name="Fujita N."/>
        </authorList>
    </citation>
    <scope>NUCLEOTIDE SEQUENCE [LARGE SCALE GENOMIC DNA]</scope>
    <source>
        <strain>47 / JCM 6285 / NBRC 100599</strain>
    </source>
</reference>
<accession>C0ZG49</accession>
<gene>
    <name evidence="1" type="primary">lspA</name>
    <name type="ordered locus">BBR47_37810</name>
</gene>
<dbReference type="EC" id="3.4.23.36" evidence="1"/>
<dbReference type="EMBL" id="AP008955">
    <property type="protein sequence ID" value="BAH44758.1"/>
    <property type="molecule type" value="Genomic_DNA"/>
</dbReference>
<dbReference type="RefSeq" id="WP_015892042.1">
    <property type="nucleotide sequence ID" value="NC_012491.1"/>
</dbReference>
<dbReference type="SMR" id="C0ZG49"/>
<dbReference type="STRING" id="358681.BBR47_37810"/>
<dbReference type="KEGG" id="bbe:BBR47_37810"/>
<dbReference type="eggNOG" id="COG0597">
    <property type="taxonomic scope" value="Bacteria"/>
</dbReference>
<dbReference type="HOGENOM" id="CLU_083252_3_0_9"/>
<dbReference type="UniPathway" id="UPA00665"/>
<dbReference type="Proteomes" id="UP000001877">
    <property type="component" value="Chromosome"/>
</dbReference>
<dbReference type="GO" id="GO:0005886">
    <property type="term" value="C:plasma membrane"/>
    <property type="evidence" value="ECO:0007669"/>
    <property type="project" value="UniProtKB-SubCell"/>
</dbReference>
<dbReference type="GO" id="GO:0004190">
    <property type="term" value="F:aspartic-type endopeptidase activity"/>
    <property type="evidence" value="ECO:0007669"/>
    <property type="project" value="UniProtKB-UniRule"/>
</dbReference>
<dbReference type="GO" id="GO:0006508">
    <property type="term" value="P:proteolysis"/>
    <property type="evidence" value="ECO:0007669"/>
    <property type="project" value="UniProtKB-KW"/>
</dbReference>
<dbReference type="HAMAP" id="MF_00161">
    <property type="entry name" value="LspA"/>
    <property type="match status" value="1"/>
</dbReference>
<dbReference type="InterPro" id="IPR001872">
    <property type="entry name" value="Peptidase_A8"/>
</dbReference>
<dbReference type="NCBIfam" id="TIGR00077">
    <property type="entry name" value="lspA"/>
    <property type="match status" value="1"/>
</dbReference>
<dbReference type="PANTHER" id="PTHR33695">
    <property type="entry name" value="LIPOPROTEIN SIGNAL PEPTIDASE"/>
    <property type="match status" value="1"/>
</dbReference>
<dbReference type="PANTHER" id="PTHR33695:SF1">
    <property type="entry name" value="LIPOPROTEIN SIGNAL PEPTIDASE"/>
    <property type="match status" value="1"/>
</dbReference>
<dbReference type="Pfam" id="PF01252">
    <property type="entry name" value="Peptidase_A8"/>
    <property type="match status" value="1"/>
</dbReference>
<dbReference type="PRINTS" id="PR00781">
    <property type="entry name" value="LIPOSIGPTASE"/>
</dbReference>
<dbReference type="PROSITE" id="PS00855">
    <property type="entry name" value="SPASE_II"/>
    <property type="match status" value="1"/>
</dbReference>
<feature type="chain" id="PRO_1000123489" description="Lipoprotein signal peptidase">
    <location>
        <begin position="1"/>
        <end position="149"/>
    </location>
</feature>
<feature type="transmembrane region" description="Helical" evidence="1">
    <location>
        <begin position="58"/>
        <end position="78"/>
    </location>
</feature>
<feature type="transmembrane region" description="Helical" evidence="1">
    <location>
        <begin position="85"/>
        <end position="105"/>
    </location>
</feature>
<feature type="transmembrane region" description="Helical" evidence="1">
    <location>
        <begin position="122"/>
        <end position="142"/>
    </location>
</feature>
<feature type="active site" evidence="1">
    <location>
        <position position="111"/>
    </location>
</feature>
<feature type="active site" evidence="1">
    <location>
        <position position="127"/>
    </location>
</feature>
<name>LSPA_BREBN</name>
<sequence>MWYYLIAAVIIALDQFTKYLIVKYMELGESIPLIADVFHLTSHRNMGAAFGILQNRRWFFIAITAVVVIGIVISLIRLGKKQPRASLALSFVLGGAVGNFIDRAMSGQVVDFLDFTLIHFPIFNVADMAITIGVGILLLDVFLDGKKNR</sequence>
<proteinExistence type="inferred from homology"/>
<organism>
    <name type="scientific">Brevibacillus brevis (strain 47 / JCM 6285 / NBRC 100599)</name>
    <dbReference type="NCBI Taxonomy" id="358681"/>
    <lineage>
        <taxon>Bacteria</taxon>
        <taxon>Bacillati</taxon>
        <taxon>Bacillota</taxon>
        <taxon>Bacilli</taxon>
        <taxon>Bacillales</taxon>
        <taxon>Paenibacillaceae</taxon>
        <taxon>Brevibacillus</taxon>
    </lineage>
</organism>
<comment type="function">
    <text evidence="1">This protein specifically catalyzes the removal of signal peptides from prolipoproteins.</text>
</comment>
<comment type="catalytic activity">
    <reaction evidence="1">
        <text>Release of signal peptides from bacterial membrane prolipoproteins. Hydrolyzes -Xaa-Yaa-Zaa-|-(S,diacylglyceryl)Cys-, in which Xaa is hydrophobic (preferably Leu), and Yaa (Ala or Ser) and Zaa (Gly or Ala) have small, neutral side chains.</text>
        <dbReference type="EC" id="3.4.23.36"/>
    </reaction>
</comment>
<comment type="pathway">
    <text evidence="1">Protein modification; lipoprotein biosynthesis (signal peptide cleavage).</text>
</comment>
<comment type="subcellular location">
    <subcellularLocation>
        <location evidence="1">Cell membrane</location>
        <topology evidence="1">Multi-pass membrane protein</topology>
    </subcellularLocation>
</comment>
<comment type="similarity">
    <text evidence="1">Belongs to the peptidase A8 family.</text>
</comment>